<sequence>MKVWFAATEATPFIKTGGLADVVGSLPLALAEEGAEVSVILPNYGQIKEQYKLEMEFLFDFIVPVGWRQQFGAVLRLKQDGVTFYFIDNEYYFKRDGVIYGHYDDAERFAYFSRAVLEMIQRVDAEEVPDVIHCHDWQTGVLPAFLRIHYQHLNRYQEIKTVFTIHNLQYQGVFPEEVLGDLLGLSHEHFTAEGIAHNGLVNYMKAGLVHANQITTVSPSYRDEIMDPYYGETLEPVLQHRAVDVRGILNGIDYRQFSPETDEHLVENYDVKTVEEGKAANKAALQQELGLPVNPDVPLFGFVSRLVDQKGIDLLAHILPDLFELDAQFIILGSGEAEYEGLFQHASTIRPDKVASYIGFDVGLAQRIYAGSDAFLMPSRFEPCGLSQLISMKYGSLPIVRETGGLRDTVQPFNQFTLEGNGFSFSNYNAQEFLDAIKRTIETYHDKPVFKHLIETAMQEDFSWIRSADEYLALYRLIAPSAD</sequence>
<dbReference type="EC" id="2.4.1.21" evidence="1"/>
<dbReference type="EMBL" id="CP001022">
    <property type="protein sequence ID" value="ACB60151.1"/>
    <property type="molecule type" value="Genomic_DNA"/>
</dbReference>
<dbReference type="RefSeq" id="WP_012369575.1">
    <property type="nucleotide sequence ID" value="NC_010556.1"/>
</dbReference>
<dbReference type="SMR" id="B1YK70"/>
<dbReference type="STRING" id="262543.Exig_0670"/>
<dbReference type="CAZy" id="GT5">
    <property type="family name" value="Glycosyltransferase Family 5"/>
</dbReference>
<dbReference type="KEGG" id="esi:Exig_0670"/>
<dbReference type="eggNOG" id="COG0297">
    <property type="taxonomic scope" value="Bacteria"/>
</dbReference>
<dbReference type="HOGENOM" id="CLU_009583_18_2_9"/>
<dbReference type="OrthoDB" id="9808590at2"/>
<dbReference type="UniPathway" id="UPA00164"/>
<dbReference type="Proteomes" id="UP000001681">
    <property type="component" value="Chromosome"/>
</dbReference>
<dbReference type="GO" id="GO:0009011">
    <property type="term" value="F:alpha-1,4-glucan glucosyltransferase (ADP-glucose donor) activity"/>
    <property type="evidence" value="ECO:0007669"/>
    <property type="project" value="UniProtKB-UniRule"/>
</dbReference>
<dbReference type="GO" id="GO:0004373">
    <property type="term" value="F:alpha-1,4-glucan glucosyltransferase (UDP-glucose donor) activity"/>
    <property type="evidence" value="ECO:0007669"/>
    <property type="project" value="InterPro"/>
</dbReference>
<dbReference type="GO" id="GO:0005978">
    <property type="term" value="P:glycogen biosynthetic process"/>
    <property type="evidence" value="ECO:0007669"/>
    <property type="project" value="UniProtKB-UniRule"/>
</dbReference>
<dbReference type="CDD" id="cd03791">
    <property type="entry name" value="GT5_Glycogen_synthase_DULL1-like"/>
    <property type="match status" value="1"/>
</dbReference>
<dbReference type="Gene3D" id="3.40.50.2000">
    <property type="entry name" value="Glycogen Phosphorylase B"/>
    <property type="match status" value="2"/>
</dbReference>
<dbReference type="HAMAP" id="MF_00484">
    <property type="entry name" value="Glycogen_synth"/>
    <property type="match status" value="1"/>
</dbReference>
<dbReference type="InterPro" id="IPR001296">
    <property type="entry name" value="Glyco_trans_1"/>
</dbReference>
<dbReference type="InterPro" id="IPR011835">
    <property type="entry name" value="GS/SS"/>
</dbReference>
<dbReference type="InterPro" id="IPR013534">
    <property type="entry name" value="Starch_synth_cat_dom"/>
</dbReference>
<dbReference type="NCBIfam" id="TIGR02095">
    <property type="entry name" value="glgA"/>
    <property type="match status" value="1"/>
</dbReference>
<dbReference type="NCBIfam" id="NF001898">
    <property type="entry name" value="PRK00654.1-1"/>
    <property type="match status" value="1"/>
</dbReference>
<dbReference type="NCBIfam" id="NF001899">
    <property type="entry name" value="PRK00654.1-2"/>
    <property type="match status" value="1"/>
</dbReference>
<dbReference type="PANTHER" id="PTHR45825:SF11">
    <property type="entry name" value="ALPHA AMYLASE DOMAIN-CONTAINING PROTEIN"/>
    <property type="match status" value="1"/>
</dbReference>
<dbReference type="PANTHER" id="PTHR45825">
    <property type="entry name" value="GRANULE-BOUND STARCH SYNTHASE 1, CHLOROPLASTIC/AMYLOPLASTIC"/>
    <property type="match status" value="1"/>
</dbReference>
<dbReference type="Pfam" id="PF08323">
    <property type="entry name" value="Glyco_transf_5"/>
    <property type="match status" value="1"/>
</dbReference>
<dbReference type="Pfam" id="PF00534">
    <property type="entry name" value="Glycos_transf_1"/>
    <property type="match status" value="1"/>
</dbReference>
<dbReference type="SUPFAM" id="SSF53756">
    <property type="entry name" value="UDP-Glycosyltransferase/glycogen phosphorylase"/>
    <property type="match status" value="1"/>
</dbReference>
<reference key="1">
    <citation type="submission" date="2008-04" db="EMBL/GenBank/DDBJ databases">
        <title>Complete sequence of chromosome of Exiguobacterium sibiricum 255-15.</title>
        <authorList>
            <consortium name="US DOE Joint Genome Institute"/>
            <person name="Copeland A."/>
            <person name="Lucas S."/>
            <person name="Lapidus A."/>
            <person name="Glavina del Rio T."/>
            <person name="Dalin E."/>
            <person name="Tice H."/>
            <person name="Bruce D."/>
            <person name="Goodwin L."/>
            <person name="Pitluck S."/>
            <person name="Kiss H."/>
            <person name="Chertkov O."/>
            <person name="Monk C."/>
            <person name="Brettin T."/>
            <person name="Detter J.C."/>
            <person name="Han C."/>
            <person name="Kuske C.R."/>
            <person name="Schmutz J."/>
            <person name="Larimer F."/>
            <person name="Land M."/>
            <person name="Hauser L."/>
            <person name="Kyrpides N."/>
            <person name="Mikhailova N."/>
            <person name="Vishnivetskaya T."/>
            <person name="Rodrigues D.F."/>
            <person name="Gilichinsky D."/>
            <person name="Tiedje J."/>
            <person name="Richardson P."/>
        </authorList>
    </citation>
    <scope>NUCLEOTIDE SEQUENCE [LARGE SCALE GENOMIC DNA]</scope>
    <source>
        <strain>DSM 17290 / CCUG 55495 / CIP 109462 / JCM 13490 / 255-15</strain>
    </source>
</reference>
<protein>
    <recommendedName>
        <fullName evidence="1">Glycogen synthase</fullName>
        <ecNumber evidence="1">2.4.1.21</ecNumber>
    </recommendedName>
    <alternativeName>
        <fullName evidence="1">Starch [bacterial glycogen] synthase</fullName>
    </alternativeName>
</protein>
<accession>B1YK70</accession>
<keyword id="KW-0320">Glycogen biosynthesis</keyword>
<keyword id="KW-0328">Glycosyltransferase</keyword>
<keyword id="KW-1185">Reference proteome</keyword>
<keyword id="KW-0808">Transferase</keyword>
<gene>
    <name evidence="1" type="primary">glgA</name>
    <name type="ordered locus">Exig_0670</name>
</gene>
<feature type="chain" id="PRO_1000126076" description="Glycogen synthase">
    <location>
        <begin position="1"/>
        <end position="483"/>
    </location>
</feature>
<feature type="binding site" evidence="1">
    <location>
        <position position="15"/>
    </location>
    <ligand>
        <name>ADP-alpha-D-glucose</name>
        <dbReference type="ChEBI" id="CHEBI:57498"/>
    </ligand>
</feature>
<name>GLGA_EXIS2</name>
<comment type="function">
    <text evidence="1">Synthesizes alpha-1,4-glucan chains using ADP-glucose.</text>
</comment>
<comment type="catalytic activity">
    <reaction evidence="1">
        <text>[(1-&gt;4)-alpha-D-glucosyl](n) + ADP-alpha-D-glucose = [(1-&gt;4)-alpha-D-glucosyl](n+1) + ADP + H(+)</text>
        <dbReference type="Rhea" id="RHEA:18189"/>
        <dbReference type="Rhea" id="RHEA-COMP:9584"/>
        <dbReference type="Rhea" id="RHEA-COMP:9587"/>
        <dbReference type="ChEBI" id="CHEBI:15378"/>
        <dbReference type="ChEBI" id="CHEBI:15444"/>
        <dbReference type="ChEBI" id="CHEBI:57498"/>
        <dbReference type="ChEBI" id="CHEBI:456216"/>
        <dbReference type="EC" id="2.4.1.21"/>
    </reaction>
</comment>
<comment type="pathway">
    <text evidence="1">Glycan biosynthesis; glycogen biosynthesis.</text>
</comment>
<comment type="similarity">
    <text evidence="1">Belongs to the glycosyltransferase 1 family. Bacterial/plant glycogen synthase subfamily.</text>
</comment>
<evidence type="ECO:0000255" key="1">
    <source>
        <dbReference type="HAMAP-Rule" id="MF_00484"/>
    </source>
</evidence>
<proteinExistence type="inferred from homology"/>
<organism>
    <name type="scientific">Exiguobacterium sibiricum (strain DSM 17290 / CCUG 55495 / CIP 109462 / JCM 13490 / 255-15)</name>
    <dbReference type="NCBI Taxonomy" id="262543"/>
    <lineage>
        <taxon>Bacteria</taxon>
        <taxon>Bacillati</taxon>
        <taxon>Bacillota</taxon>
        <taxon>Bacilli</taxon>
        <taxon>Bacillales</taxon>
        <taxon>Bacillales Family XII. Incertae Sedis</taxon>
        <taxon>Exiguobacterium</taxon>
    </lineage>
</organism>